<accession>Q9UT51</accession>
<accession>Q9UTD9</accession>
<reference key="1">
    <citation type="journal article" date="2002" name="Nature">
        <title>The genome sequence of Schizosaccharomyces pombe.</title>
        <authorList>
            <person name="Wood V."/>
            <person name="Gwilliam R."/>
            <person name="Rajandream M.A."/>
            <person name="Lyne M.H."/>
            <person name="Lyne R."/>
            <person name="Stewart A."/>
            <person name="Sgouros J.G."/>
            <person name="Peat N."/>
            <person name="Hayles J."/>
            <person name="Baker S.G."/>
            <person name="Basham D."/>
            <person name="Bowman S."/>
            <person name="Brooks K."/>
            <person name="Brown D."/>
            <person name="Brown S."/>
            <person name="Chillingworth T."/>
            <person name="Churcher C.M."/>
            <person name="Collins M."/>
            <person name="Connor R."/>
            <person name="Cronin A."/>
            <person name="Davis P."/>
            <person name="Feltwell T."/>
            <person name="Fraser A."/>
            <person name="Gentles S."/>
            <person name="Goble A."/>
            <person name="Hamlin N."/>
            <person name="Harris D.E."/>
            <person name="Hidalgo J."/>
            <person name="Hodgson G."/>
            <person name="Holroyd S."/>
            <person name="Hornsby T."/>
            <person name="Howarth S."/>
            <person name="Huckle E.J."/>
            <person name="Hunt S."/>
            <person name="Jagels K."/>
            <person name="James K.D."/>
            <person name="Jones L."/>
            <person name="Jones M."/>
            <person name="Leather S."/>
            <person name="McDonald S."/>
            <person name="McLean J."/>
            <person name="Mooney P."/>
            <person name="Moule S."/>
            <person name="Mungall K.L."/>
            <person name="Murphy L.D."/>
            <person name="Niblett D."/>
            <person name="Odell C."/>
            <person name="Oliver K."/>
            <person name="O'Neil S."/>
            <person name="Pearson D."/>
            <person name="Quail M.A."/>
            <person name="Rabbinowitsch E."/>
            <person name="Rutherford K.M."/>
            <person name="Rutter S."/>
            <person name="Saunders D."/>
            <person name="Seeger K."/>
            <person name="Sharp S."/>
            <person name="Skelton J."/>
            <person name="Simmonds M.N."/>
            <person name="Squares R."/>
            <person name="Squares S."/>
            <person name="Stevens K."/>
            <person name="Taylor K."/>
            <person name="Taylor R.G."/>
            <person name="Tivey A."/>
            <person name="Walsh S.V."/>
            <person name="Warren T."/>
            <person name="Whitehead S."/>
            <person name="Woodward J.R."/>
            <person name="Volckaert G."/>
            <person name="Aert R."/>
            <person name="Robben J."/>
            <person name="Grymonprez B."/>
            <person name="Weltjens I."/>
            <person name="Vanstreels E."/>
            <person name="Rieger M."/>
            <person name="Schaefer M."/>
            <person name="Mueller-Auer S."/>
            <person name="Gabel C."/>
            <person name="Fuchs M."/>
            <person name="Duesterhoeft A."/>
            <person name="Fritzc C."/>
            <person name="Holzer E."/>
            <person name="Moestl D."/>
            <person name="Hilbert H."/>
            <person name="Borzym K."/>
            <person name="Langer I."/>
            <person name="Beck A."/>
            <person name="Lehrach H."/>
            <person name="Reinhardt R."/>
            <person name="Pohl T.M."/>
            <person name="Eger P."/>
            <person name="Zimmermann W."/>
            <person name="Wedler H."/>
            <person name="Wambutt R."/>
            <person name="Purnelle B."/>
            <person name="Goffeau A."/>
            <person name="Cadieu E."/>
            <person name="Dreano S."/>
            <person name="Gloux S."/>
            <person name="Lelaure V."/>
            <person name="Mottier S."/>
            <person name="Galibert F."/>
            <person name="Aves S.J."/>
            <person name="Xiang Z."/>
            <person name="Hunt C."/>
            <person name="Moore K."/>
            <person name="Hurst S.M."/>
            <person name="Lucas M."/>
            <person name="Rochet M."/>
            <person name="Gaillardin C."/>
            <person name="Tallada V.A."/>
            <person name="Garzon A."/>
            <person name="Thode G."/>
            <person name="Daga R.R."/>
            <person name="Cruzado L."/>
            <person name="Jimenez J."/>
            <person name="Sanchez M."/>
            <person name="del Rey F."/>
            <person name="Benito J."/>
            <person name="Dominguez A."/>
            <person name="Revuelta J.L."/>
            <person name="Moreno S."/>
            <person name="Armstrong J."/>
            <person name="Forsburg S.L."/>
            <person name="Cerutti L."/>
            <person name="Lowe T."/>
            <person name="McCombie W.R."/>
            <person name="Paulsen I."/>
            <person name="Potashkin J."/>
            <person name="Shpakovski G.V."/>
            <person name="Ussery D."/>
            <person name="Barrell B.G."/>
            <person name="Nurse P."/>
        </authorList>
    </citation>
    <scope>NUCLEOTIDE SEQUENCE [LARGE SCALE GENOMIC DNA]</scope>
    <source>
        <strain>972 / ATCC 24843</strain>
    </source>
</reference>
<reference key="2">
    <citation type="journal article" date="2011" name="Science">
        <title>Comparative functional genomics of the fission yeasts.</title>
        <authorList>
            <person name="Rhind N."/>
            <person name="Chen Z."/>
            <person name="Yassour M."/>
            <person name="Thompson D.A."/>
            <person name="Haas B.J."/>
            <person name="Habib N."/>
            <person name="Wapinski I."/>
            <person name="Roy S."/>
            <person name="Lin M.F."/>
            <person name="Heiman D.I."/>
            <person name="Young S.K."/>
            <person name="Furuya K."/>
            <person name="Guo Y."/>
            <person name="Pidoux A."/>
            <person name="Chen H.M."/>
            <person name="Robbertse B."/>
            <person name="Goldberg J.M."/>
            <person name="Aoki K."/>
            <person name="Bayne E.H."/>
            <person name="Berlin A.M."/>
            <person name="Desjardins C.A."/>
            <person name="Dobbs E."/>
            <person name="Dukaj L."/>
            <person name="Fan L."/>
            <person name="FitzGerald M.G."/>
            <person name="French C."/>
            <person name="Gujja S."/>
            <person name="Hansen K."/>
            <person name="Keifenheim D."/>
            <person name="Levin J.Z."/>
            <person name="Mosher R.A."/>
            <person name="Mueller C.A."/>
            <person name="Pfiffner J."/>
            <person name="Priest M."/>
            <person name="Russ C."/>
            <person name="Smialowska A."/>
            <person name="Swoboda P."/>
            <person name="Sykes S.M."/>
            <person name="Vaughn M."/>
            <person name="Vengrova S."/>
            <person name="Yoder R."/>
            <person name="Zeng Q."/>
            <person name="Allshire R."/>
            <person name="Baulcombe D."/>
            <person name="Birren B.W."/>
            <person name="Brown W."/>
            <person name="Ekwall K."/>
            <person name="Kellis M."/>
            <person name="Leatherwood J."/>
            <person name="Levin H."/>
            <person name="Margalit H."/>
            <person name="Martienssen R."/>
            <person name="Nieduszynski C.A."/>
            <person name="Spatafora J.W."/>
            <person name="Friedman N."/>
            <person name="Dalgaard J.Z."/>
            <person name="Baumann P."/>
            <person name="Niki H."/>
            <person name="Regev A."/>
            <person name="Nusbaum C."/>
        </authorList>
    </citation>
    <scope>REVISION OF GENE MODEL</scope>
</reference>
<sequence length="338" mass="38950">MVANMEFQGTLPFHPLEDPETLLLKFTDFVHQHSVEQCNQLSMYIIASVNSLAEAFYGSHPEKYNIVFQSVEYAAHSPAISVMHVCYLKELLRQGQYATSLKSFNDLEVSKHIPGSILLQYCMYAAYHCLGNNDLDSAKVWYFSILYIPTTTLTSFHEEAYYSFLLLYIITTGKKFQLDSATSSNVLPLKRHMVPYEEFLDAYLKDVNTLRTVIKEHWSRFLKDNSTAFILFALEVYPMHRLKKWRKTFSSLKLEYIAKQLAISQDVAKEIIQKFDNKTNFTVANGEIFLTFNALDDVSPEMHSDLCQQLIEASKNFEASIRLKSVIYSKIMAKKLNA</sequence>
<comment type="function">
    <text evidence="1">Component of the COP9 signalosome (CSN) complex that acts as an regulator of the ubiquitin (Ubl) conjugation pathway by mediating the deneddylation of the cullin subunit of SCF-type E3 ubiquitin-protein ligase complexes.</text>
</comment>
<comment type="subunit">
    <text evidence="1">Component of the COP9 signalosome (CSN) complex.</text>
</comment>
<comment type="subcellular location">
    <subcellularLocation>
        <location evidence="1">Cytoplasm</location>
    </subcellularLocation>
    <subcellularLocation>
        <location evidence="1">Nucleus</location>
    </subcellularLocation>
</comment>
<comment type="similarity">
    <text evidence="3">Belongs to the CSN3 family.</text>
</comment>
<organism>
    <name type="scientific">Schizosaccharomyces pombe (strain 972 / ATCC 24843)</name>
    <name type="common">Fission yeast</name>
    <dbReference type="NCBI Taxonomy" id="284812"/>
    <lineage>
        <taxon>Eukaryota</taxon>
        <taxon>Fungi</taxon>
        <taxon>Dikarya</taxon>
        <taxon>Ascomycota</taxon>
        <taxon>Taphrinomycotina</taxon>
        <taxon>Schizosaccharomycetes</taxon>
        <taxon>Schizosaccharomycetales</taxon>
        <taxon>Schizosaccharomycetaceae</taxon>
        <taxon>Schizosaccharomyces</taxon>
    </lineage>
</organism>
<evidence type="ECO:0000250" key="1"/>
<evidence type="ECO:0000255" key="2">
    <source>
        <dbReference type="PROSITE-ProRule" id="PRU01185"/>
    </source>
</evidence>
<evidence type="ECO:0000305" key="3"/>
<proteinExistence type="inferred from homology"/>
<gene>
    <name type="primary">csn3</name>
    <name type="ORF">SPAC222.16c</name>
    <name type="ORF">SPAC821.02c</name>
</gene>
<keyword id="KW-0963">Cytoplasm</keyword>
<keyword id="KW-0539">Nucleus</keyword>
<keyword id="KW-1185">Reference proteome</keyword>
<keyword id="KW-0736">Signalosome</keyword>
<protein>
    <recommendedName>
        <fullName>COP9 signalosome complex subunit 3</fullName>
        <shortName>CSN complex subunit 3</shortName>
        <shortName>SGN3</shortName>
    </recommendedName>
</protein>
<dbReference type="EMBL" id="CU329670">
    <property type="protein sequence ID" value="CAB60708.3"/>
    <property type="molecule type" value="Genomic_DNA"/>
</dbReference>
<dbReference type="PIR" id="T41713">
    <property type="entry name" value="T41713"/>
</dbReference>
<dbReference type="PIR" id="T50156">
    <property type="entry name" value="T50156"/>
</dbReference>
<dbReference type="RefSeq" id="NP_593155.3">
    <property type="nucleotide sequence ID" value="NM_001018552.3"/>
</dbReference>
<dbReference type="SMR" id="Q9UT51"/>
<dbReference type="BioGRID" id="278402">
    <property type="interactions" value="39"/>
</dbReference>
<dbReference type="FunCoup" id="Q9UT51">
    <property type="interactions" value="15"/>
</dbReference>
<dbReference type="STRING" id="284812.Q9UT51"/>
<dbReference type="PaxDb" id="4896-SPAC222.16c.1"/>
<dbReference type="EnsemblFungi" id="SPAC222.16c.1">
    <property type="protein sequence ID" value="SPAC222.16c.1:pep"/>
    <property type="gene ID" value="SPAC222.16c"/>
</dbReference>
<dbReference type="GeneID" id="2541912"/>
<dbReference type="KEGG" id="spo:2541912"/>
<dbReference type="PomBase" id="SPAC222.16c">
    <property type="gene designation" value="csn3"/>
</dbReference>
<dbReference type="VEuPathDB" id="FungiDB:SPAC222.16c"/>
<dbReference type="eggNOG" id="KOG2582">
    <property type="taxonomic scope" value="Eukaryota"/>
</dbReference>
<dbReference type="HOGENOM" id="CLU_816744_0_0_1"/>
<dbReference type="InParanoid" id="Q9UT51"/>
<dbReference type="OMA" id="YHCLGNN"/>
<dbReference type="PRO" id="PR:Q9UT51"/>
<dbReference type="Proteomes" id="UP000002485">
    <property type="component" value="Chromosome I"/>
</dbReference>
<dbReference type="GO" id="GO:0008180">
    <property type="term" value="C:COP9 signalosome"/>
    <property type="evidence" value="ECO:0000318"/>
    <property type="project" value="GO_Central"/>
</dbReference>
<dbReference type="GO" id="GO:0005829">
    <property type="term" value="C:cytosol"/>
    <property type="evidence" value="ECO:0007005"/>
    <property type="project" value="PomBase"/>
</dbReference>
<dbReference type="GO" id="GO:0005634">
    <property type="term" value="C:nucleus"/>
    <property type="evidence" value="ECO:0007005"/>
    <property type="project" value="PomBase"/>
</dbReference>
<dbReference type="GO" id="GO:0005628">
    <property type="term" value="C:prospore membrane"/>
    <property type="evidence" value="ECO:0007005"/>
    <property type="project" value="PomBase"/>
</dbReference>
<dbReference type="GO" id="GO:0000338">
    <property type="term" value="P:protein deneddylation"/>
    <property type="evidence" value="ECO:0000304"/>
    <property type="project" value="PomBase"/>
</dbReference>
<dbReference type="GO" id="GO:0006511">
    <property type="term" value="P:ubiquitin-dependent protein catabolic process"/>
    <property type="evidence" value="ECO:0000318"/>
    <property type="project" value="GO_Central"/>
</dbReference>
<dbReference type="InterPro" id="IPR050756">
    <property type="entry name" value="CSN3"/>
</dbReference>
<dbReference type="InterPro" id="IPR000717">
    <property type="entry name" value="PCI_dom"/>
</dbReference>
<dbReference type="PANTHER" id="PTHR10758">
    <property type="entry name" value="26S PROTEASOME NON-ATPASE REGULATORY SUBUNIT 3/COP9 SIGNALOSOME COMPLEX SUBUNIT 3"/>
    <property type="match status" value="1"/>
</dbReference>
<dbReference type="PANTHER" id="PTHR10758:SF1">
    <property type="entry name" value="COP9 SIGNALOSOME COMPLEX SUBUNIT 3"/>
    <property type="match status" value="1"/>
</dbReference>
<dbReference type="PROSITE" id="PS50250">
    <property type="entry name" value="PCI"/>
    <property type="match status" value="1"/>
</dbReference>
<feature type="chain" id="PRO_0000120986" description="COP9 signalosome complex subunit 3">
    <location>
        <begin position="1"/>
        <end position="338"/>
    </location>
</feature>
<feature type="domain" description="PCI" evidence="2">
    <location>
        <begin position="137"/>
        <end position="306"/>
    </location>
</feature>
<name>CSN3_SCHPO</name>